<protein>
    <recommendedName>
        <fullName>Ubiquitin carboxyl-terminal hydrolase 10-B</fullName>
        <ecNumber evidence="1">3.4.19.12</ecNumber>
    </recommendedName>
    <alternativeName>
        <fullName>Deubiquitinating enzyme 10-B</fullName>
    </alternativeName>
    <alternativeName>
        <fullName>Ubiquitin thioesterase 10-B</fullName>
    </alternativeName>
    <alternativeName>
        <fullName>Ubiquitin-specific-processing protease 10-B</fullName>
    </alternativeName>
</protein>
<sequence length="805" mass="89197">MASPSGQYIFGEFSDDEFKQFFVTARCTVELPPYNEHFFPCGPQSSVDFQDDMHLKFSEVIHGISGEECPRIEFGIEQVVDRDTALNNNTDYSISSNLNPQAPEFILTCSSFPKTSNNVLHENNFDAINCQFSESAIPDGSGNADSDGTSGTGQRERKKKKKRPPGYYSYLEGVGDVPSETLVNGHANSTGLDSISTDDPDLADDIPISTTSPRTCTSPDNFVDLINEALSDEASMHNVLDNARTAGQPEECSVTSSEQSCIPSDNGSESPVRTAVVQPFAGTDTTENLGVTNGQTLESPEEDTVSNGVVLHPEVSSFSEEVKTEETSTAQALIHLSGSASSNPPAKSWASLFHTSKPSSSPQVAYVETKNAPTVVSPQVPEKQVEIKEEPVPVSDDPVAIEFAELLEEVKLVHKPVSLQPRGLINKGNWCYINATLQALVACPPMYHLMKSIPVYTKAQRPCTSTPMIDSFVRLMNEFTNMPILPKAKQAPGEKVIKDIRPGAPFEPTYIYRLLTVFKSSLSEKGRQEDAEEYLGFILNGLHEEMLALKKLLLPQNDQIHINNCPNPVSGVEEVNKEEQEGSDEEWEQVGPRNKSSVTRQADFVQTPITDIFGGHMRSVVYQQSSKESATLQPFFTLQLDIQSEKIRTVQDALESLVARESVQGYTTKTKQEVEICRRVTLEELPPVLVLHLKRFVFEKTGGCQKLIKNIEYPVDLEVSKDLLSPGVKSKIFKGQRTYRLFAVVYHHGNSATGGHYTTDVFQIGLNGWLRIDDQSVKVINQYQVVKQTVERTAYLLYYRRVDLL</sequence>
<gene>
    <name type="primary">usp10-b</name>
</gene>
<comment type="function">
    <text evidence="1">Hydrolase that can remove conjugated ubiquitin from target proteins such as p53/tp53, rps2/us5, rps3/us3, rps10/eS10, becn1, snx3 and cftr. Acts as an essential regulator of p53/tp53 stability: in unstressed cells, specifically deubiquitinates p53/tp53 in the cytoplasm, leading to counteracts MDM2 action and stabilize p53/tp53. Following DNA damage, translocates to the nucleus and deubiquitinates p53/tp53, leading to regulate the p53/TP53-dependent DNA damage response. Component of a regulatory loop that controls autophagy and p53/tp53 levels. Plays a key role in 40S ribosome subunit recycling when a ribosome has stalled during translation: acts both by inhibiting formation of stress granules, which store stalled translation pre-initiation complexes, and mediating deubiquitination of 40S ribosome subunits. Deubiquitinates cftr in early endosomes, enhancing its endocytic recycling.</text>
</comment>
<comment type="catalytic activity">
    <reaction evidence="1">
        <text>Thiol-dependent hydrolysis of ester, thioester, amide, peptide and isopeptide bonds formed by the C-terminal Gly of ubiquitin (a 76-residue protein attached to proteins as an intracellular targeting signal).</text>
        <dbReference type="EC" id="3.4.19.12"/>
    </reaction>
</comment>
<comment type="subcellular location">
    <subcellularLocation>
        <location evidence="1">Cytoplasm</location>
    </subcellularLocation>
    <subcellularLocation>
        <location evidence="1">Nucleus</location>
    </subcellularLocation>
</comment>
<comment type="similarity">
    <text evidence="5">Belongs to the peptidase C19 family. USP10 subfamily.</text>
</comment>
<organism>
    <name type="scientific">Xenopus laevis</name>
    <name type="common">African clawed frog</name>
    <dbReference type="NCBI Taxonomy" id="8355"/>
    <lineage>
        <taxon>Eukaryota</taxon>
        <taxon>Metazoa</taxon>
        <taxon>Chordata</taxon>
        <taxon>Craniata</taxon>
        <taxon>Vertebrata</taxon>
        <taxon>Euteleostomi</taxon>
        <taxon>Amphibia</taxon>
        <taxon>Batrachia</taxon>
        <taxon>Anura</taxon>
        <taxon>Pipoidea</taxon>
        <taxon>Pipidae</taxon>
        <taxon>Xenopodinae</taxon>
        <taxon>Xenopus</taxon>
        <taxon>Xenopus</taxon>
    </lineage>
</organism>
<feature type="chain" id="PRO_0000393003" description="Ubiquitin carboxyl-terminal hydrolase 10-B">
    <location>
        <begin position="1"/>
        <end position="805"/>
    </location>
</feature>
<feature type="domain" description="USP">
    <location>
        <begin position="422"/>
        <end position="802"/>
    </location>
</feature>
<feature type="region of interest" description="Disordered" evidence="4">
    <location>
        <begin position="136"/>
        <end position="173"/>
    </location>
</feature>
<feature type="region of interest" description="Disordered" evidence="4">
    <location>
        <begin position="284"/>
        <end position="305"/>
    </location>
</feature>
<feature type="region of interest" description="Disordered" evidence="4">
    <location>
        <begin position="573"/>
        <end position="600"/>
    </location>
</feature>
<feature type="compositionally biased region" description="Polar residues" evidence="4">
    <location>
        <begin position="143"/>
        <end position="153"/>
    </location>
</feature>
<feature type="compositionally biased region" description="Polar residues" evidence="4">
    <location>
        <begin position="284"/>
        <end position="298"/>
    </location>
</feature>
<feature type="active site" description="Nucleophile" evidence="2 3">
    <location>
        <position position="431"/>
    </location>
</feature>
<feature type="active site" description="Proton acceptor" evidence="2 3">
    <location>
        <position position="756"/>
    </location>
</feature>
<keyword id="KW-0072">Autophagy</keyword>
<keyword id="KW-0963">Cytoplasm</keyword>
<keyword id="KW-0227">DNA damage</keyword>
<keyword id="KW-0234">DNA repair</keyword>
<keyword id="KW-0378">Hydrolase</keyword>
<keyword id="KW-0539">Nucleus</keyword>
<keyword id="KW-0645">Protease</keyword>
<keyword id="KW-1185">Reference proteome</keyword>
<keyword id="KW-0788">Thiol protease</keyword>
<keyword id="KW-0833">Ubl conjugation pathway</keyword>
<evidence type="ECO:0000250" key="1">
    <source>
        <dbReference type="UniProtKB" id="Q14694"/>
    </source>
</evidence>
<evidence type="ECO:0000255" key="2">
    <source>
        <dbReference type="PROSITE-ProRule" id="PRU10092"/>
    </source>
</evidence>
<evidence type="ECO:0000255" key="3">
    <source>
        <dbReference type="PROSITE-ProRule" id="PRU10093"/>
    </source>
</evidence>
<evidence type="ECO:0000256" key="4">
    <source>
        <dbReference type="SAM" id="MobiDB-lite"/>
    </source>
</evidence>
<evidence type="ECO:0000305" key="5"/>
<dbReference type="EC" id="3.4.19.12" evidence="1"/>
<dbReference type="EMBL" id="BC044285">
    <property type="protein sequence ID" value="AAH44285.1"/>
    <property type="molecule type" value="mRNA"/>
</dbReference>
<dbReference type="RefSeq" id="NP_001080643.1">
    <property type="nucleotide sequence ID" value="NM_001087174.1"/>
</dbReference>
<dbReference type="SMR" id="Q7ZXR7"/>
<dbReference type="IntAct" id="Q7ZXR7">
    <property type="interactions" value="1"/>
</dbReference>
<dbReference type="MEROPS" id="C19.018"/>
<dbReference type="DNASU" id="380335"/>
<dbReference type="GeneID" id="380335"/>
<dbReference type="KEGG" id="xla:380335"/>
<dbReference type="AGR" id="Xenbase:XB-GENE-17339212"/>
<dbReference type="CTD" id="380335"/>
<dbReference type="Xenbase" id="XB-GENE-17339212">
    <property type="gene designation" value="usp10.L"/>
</dbReference>
<dbReference type="OMA" id="TDSTECE"/>
<dbReference type="OrthoDB" id="429671at2759"/>
<dbReference type="Proteomes" id="UP000186698">
    <property type="component" value="Chromosome 4L"/>
</dbReference>
<dbReference type="Bgee" id="380335">
    <property type="expression patterns" value="Expressed in neurula embryo and 19 other cell types or tissues"/>
</dbReference>
<dbReference type="GO" id="GO:0005737">
    <property type="term" value="C:cytoplasm"/>
    <property type="evidence" value="ECO:0000250"/>
    <property type="project" value="UniProtKB"/>
</dbReference>
<dbReference type="GO" id="GO:0005829">
    <property type="term" value="C:cytosol"/>
    <property type="evidence" value="ECO:0000318"/>
    <property type="project" value="GO_Central"/>
</dbReference>
<dbReference type="GO" id="GO:0005769">
    <property type="term" value="C:early endosome"/>
    <property type="evidence" value="ECO:0000250"/>
    <property type="project" value="UniProtKB"/>
</dbReference>
<dbReference type="GO" id="GO:0005634">
    <property type="term" value="C:nucleus"/>
    <property type="evidence" value="ECO:0000250"/>
    <property type="project" value="UniProtKB"/>
</dbReference>
<dbReference type="GO" id="GO:0004843">
    <property type="term" value="F:cysteine-type deubiquitinase activity"/>
    <property type="evidence" value="ECO:0000250"/>
    <property type="project" value="UniProtKB"/>
</dbReference>
<dbReference type="GO" id="GO:0004197">
    <property type="term" value="F:cysteine-type endopeptidase activity"/>
    <property type="evidence" value="ECO:0000250"/>
    <property type="project" value="UniProtKB"/>
</dbReference>
<dbReference type="GO" id="GO:0002039">
    <property type="term" value="F:p53 binding"/>
    <property type="evidence" value="ECO:0000250"/>
    <property type="project" value="UniProtKB"/>
</dbReference>
<dbReference type="GO" id="GO:0044325">
    <property type="term" value="F:transmembrane transporter binding"/>
    <property type="evidence" value="ECO:0000250"/>
    <property type="project" value="UniProtKB"/>
</dbReference>
<dbReference type="GO" id="GO:0006914">
    <property type="term" value="P:autophagy"/>
    <property type="evidence" value="ECO:0007669"/>
    <property type="project" value="UniProtKB-KW"/>
</dbReference>
<dbReference type="GO" id="GO:0071347">
    <property type="term" value="P:cellular response to interleukin-1"/>
    <property type="evidence" value="ECO:0000250"/>
    <property type="project" value="UniProtKB"/>
</dbReference>
<dbReference type="GO" id="GO:0006974">
    <property type="term" value="P:DNA damage response"/>
    <property type="evidence" value="ECO:0000250"/>
    <property type="project" value="UniProtKB"/>
</dbReference>
<dbReference type="GO" id="GO:0030330">
    <property type="term" value="P:DNA damage response, signal transduction by p53 class mediator"/>
    <property type="evidence" value="ECO:0000250"/>
    <property type="project" value="UniProtKB"/>
</dbReference>
<dbReference type="GO" id="GO:0006281">
    <property type="term" value="P:DNA repair"/>
    <property type="evidence" value="ECO:0007669"/>
    <property type="project" value="UniProtKB-KW"/>
</dbReference>
<dbReference type="GO" id="GO:0043124">
    <property type="term" value="P:negative regulation of canonical NF-kappaB signal transduction"/>
    <property type="evidence" value="ECO:0000250"/>
    <property type="project" value="UniProtKB"/>
</dbReference>
<dbReference type="GO" id="GO:0062030">
    <property type="term" value="P:negative regulation of stress granule assembly"/>
    <property type="evidence" value="ECO:0000250"/>
    <property type="project" value="UniProtKB"/>
</dbReference>
<dbReference type="GO" id="GO:0016579">
    <property type="term" value="P:protein deubiquitination"/>
    <property type="evidence" value="ECO:0000250"/>
    <property type="project" value="UniProtKB"/>
</dbReference>
<dbReference type="GO" id="GO:0006508">
    <property type="term" value="P:proteolysis"/>
    <property type="evidence" value="ECO:0007669"/>
    <property type="project" value="UniProtKB-KW"/>
</dbReference>
<dbReference type="GO" id="GO:0010506">
    <property type="term" value="P:regulation of autophagy"/>
    <property type="evidence" value="ECO:0000250"/>
    <property type="project" value="UniProtKB"/>
</dbReference>
<dbReference type="GO" id="GO:0031647">
    <property type="term" value="P:regulation of protein stability"/>
    <property type="evidence" value="ECO:0000318"/>
    <property type="project" value="GO_Central"/>
</dbReference>
<dbReference type="GO" id="GO:0072344">
    <property type="term" value="P:rescue of stalled ribosome"/>
    <property type="evidence" value="ECO:0000250"/>
    <property type="project" value="UniProtKB"/>
</dbReference>
<dbReference type="CDD" id="cd02257">
    <property type="entry name" value="Peptidase_C19"/>
    <property type="match status" value="1"/>
</dbReference>
<dbReference type="FunFam" id="3.90.70.10:FF:000015">
    <property type="entry name" value="Ubiquitin specific peptidase 10"/>
    <property type="match status" value="1"/>
</dbReference>
<dbReference type="Gene3D" id="3.90.70.10">
    <property type="entry name" value="Cysteine proteinases"/>
    <property type="match status" value="1"/>
</dbReference>
<dbReference type="InterPro" id="IPR038765">
    <property type="entry name" value="Papain-like_cys_pep_sf"/>
</dbReference>
<dbReference type="InterPro" id="IPR050164">
    <property type="entry name" value="Peptidase_C19"/>
</dbReference>
<dbReference type="InterPro" id="IPR001394">
    <property type="entry name" value="Peptidase_C19_UCH"/>
</dbReference>
<dbReference type="InterPro" id="IPR018200">
    <property type="entry name" value="USP_CS"/>
</dbReference>
<dbReference type="InterPro" id="IPR028889">
    <property type="entry name" value="USP_dom"/>
</dbReference>
<dbReference type="PANTHER" id="PTHR24006">
    <property type="entry name" value="UBIQUITIN CARBOXYL-TERMINAL HYDROLASE"/>
    <property type="match status" value="1"/>
</dbReference>
<dbReference type="PANTHER" id="PTHR24006:SF687">
    <property type="entry name" value="UBIQUITIN CARBOXYL-TERMINAL HYDROLASE 10"/>
    <property type="match status" value="1"/>
</dbReference>
<dbReference type="Pfam" id="PF00443">
    <property type="entry name" value="UCH"/>
    <property type="match status" value="1"/>
</dbReference>
<dbReference type="SUPFAM" id="SSF54001">
    <property type="entry name" value="Cysteine proteinases"/>
    <property type="match status" value="1"/>
</dbReference>
<dbReference type="PROSITE" id="PS00972">
    <property type="entry name" value="USP_1"/>
    <property type="match status" value="1"/>
</dbReference>
<dbReference type="PROSITE" id="PS00973">
    <property type="entry name" value="USP_2"/>
    <property type="match status" value="1"/>
</dbReference>
<dbReference type="PROSITE" id="PS50235">
    <property type="entry name" value="USP_3"/>
    <property type="match status" value="1"/>
</dbReference>
<name>UB10B_XENLA</name>
<accession>Q7ZXR7</accession>
<reference key="1">
    <citation type="submission" date="2003-01" db="EMBL/GenBank/DDBJ databases">
        <authorList>
            <consortium name="NIH - Xenopus Gene Collection (XGC) project"/>
        </authorList>
    </citation>
    <scope>NUCLEOTIDE SEQUENCE [LARGE SCALE MRNA]</scope>
    <source>
        <tissue>Embryo</tissue>
    </source>
</reference>
<proteinExistence type="evidence at transcript level"/>